<evidence type="ECO:0000255" key="1"/>
<evidence type="ECO:0000269" key="2">
    <source>
    </source>
</evidence>
<evidence type="ECO:0000269" key="3">
    <source>
    </source>
</evidence>
<evidence type="ECO:0000269" key="4">
    <source>
    </source>
</evidence>
<evidence type="ECO:0000305" key="5"/>
<proteinExistence type="evidence at protein level"/>
<sequence>MNSVTKISTLLIVILSFLCFVEGLICNSCEKSRDSRCTMSQSRCVAKPGESCSTVSHFVGTKHVYSKQMCSPQCKEKQLNTGKKLIYIMCCEKNLCNSF</sequence>
<reference key="1">
    <citation type="journal article" date="2001" name="J. Biol. Chem.">
        <title>A novel heat-labile phospholipid-binding protein, SVS VII, in mouse seminal vesicle as a sperm motility enhancer.</title>
        <authorList>
            <person name="Luo C.-W."/>
            <person name="Lin H.-J."/>
            <person name="Chen Y.-H."/>
        </authorList>
    </citation>
    <scope>NUCLEOTIDE SEQUENCE [MRNA]</scope>
    <scope>PROTEIN SEQUENCE OF 24-41</scope>
    <scope>FUNCTION</scope>
    <scope>MASS SPECTROMETRY</scope>
    <source>
        <strain>CD-1</strain>
        <tissue>Seminal vesicle</tissue>
    </source>
</reference>
<reference key="2">
    <citation type="journal article" date="2005" name="Science">
        <title>The transcriptional landscape of the mammalian genome.</title>
        <authorList>
            <person name="Carninci P."/>
            <person name="Kasukawa T."/>
            <person name="Katayama S."/>
            <person name="Gough J."/>
            <person name="Frith M.C."/>
            <person name="Maeda N."/>
            <person name="Oyama R."/>
            <person name="Ravasi T."/>
            <person name="Lenhard B."/>
            <person name="Wells C."/>
            <person name="Kodzius R."/>
            <person name="Shimokawa K."/>
            <person name="Bajic V.B."/>
            <person name="Brenner S.E."/>
            <person name="Batalov S."/>
            <person name="Forrest A.R."/>
            <person name="Zavolan M."/>
            <person name="Davis M.J."/>
            <person name="Wilming L.G."/>
            <person name="Aidinis V."/>
            <person name="Allen J.E."/>
            <person name="Ambesi-Impiombato A."/>
            <person name="Apweiler R."/>
            <person name="Aturaliya R.N."/>
            <person name="Bailey T.L."/>
            <person name="Bansal M."/>
            <person name="Baxter L."/>
            <person name="Beisel K.W."/>
            <person name="Bersano T."/>
            <person name="Bono H."/>
            <person name="Chalk A.M."/>
            <person name="Chiu K.P."/>
            <person name="Choudhary V."/>
            <person name="Christoffels A."/>
            <person name="Clutterbuck D.R."/>
            <person name="Crowe M.L."/>
            <person name="Dalla E."/>
            <person name="Dalrymple B.P."/>
            <person name="de Bono B."/>
            <person name="Della Gatta G."/>
            <person name="di Bernardo D."/>
            <person name="Down T."/>
            <person name="Engstrom P."/>
            <person name="Fagiolini M."/>
            <person name="Faulkner G."/>
            <person name="Fletcher C.F."/>
            <person name="Fukushima T."/>
            <person name="Furuno M."/>
            <person name="Futaki S."/>
            <person name="Gariboldi M."/>
            <person name="Georgii-Hemming P."/>
            <person name="Gingeras T.R."/>
            <person name="Gojobori T."/>
            <person name="Green R.E."/>
            <person name="Gustincich S."/>
            <person name="Harbers M."/>
            <person name="Hayashi Y."/>
            <person name="Hensch T.K."/>
            <person name="Hirokawa N."/>
            <person name="Hill D."/>
            <person name="Huminiecki L."/>
            <person name="Iacono M."/>
            <person name="Ikeo K."/>
            <person name="Iwama A."/>
            <person name="Ishikawa T."/>
            <person name="Jakt M."/>
            <person name="Kanapin A."/>
            <person name="Katoh M."/>
            <person name="Kawasawa Y."/>
            <person name="Kelso J."/>
            <person name="Kitamura H."/>
            <person name="Kitano H."/>
            <person name="Kollias G."/>
            <person name="Krishnan S.P."/>
            <person name="Kruger A."/>
            <person name="Kummerfeld S.K."/>
            <person name="Kurochkin I.V."/>
            <person name="Lareau L.F."/>
            <person name="Lazarevic D."/>
            <person name="Lipovich L."/>
            <person name="Liu J."/>
            <person name="Liuni S."/>
            <person name="McWilliam S."/>
            <person name="Madan Babu M."/>
            <person name="Madera M."/>
            <person name="Marchionni L."/>
            <person name="Matsuda H."/>
            <person name="Matsuzawa S."/>
            <person name="Miki H."/>
            <person name="Mignone F."/>
            <person name="Miyake S."/>
            <person name="Morris K."/>
            <person name="Mottagui-Tabar S."/>
            <person name="Mulder N."/>
            <person name="Nakano N."/>
            <person name="Nakauchi H."/>
            <person name="Ng P."/>
            <person name="Nilsson R."/>
            <person name="Nishiguchi S."/>
            <person name="Nishikawa S."/>
            <person name="Nori F."/>
            <person name="Ohara O."/>
            <person name="Okazaki Y."/>
            <person name="Orlando V."/>
            <person name="Pang K.C."/>
            <person name="Pavan W.J."/>
            <person name="Pavesi G."/>
            <person name="Pesole G."/>
            <person name="Petrovsky N."/>
            <person name="Piazza S."/>
            <person name="Reed J."/>
            <person name="Reid J.F."/>
            <person name="Ring B.Z."/>
            <person name="Ringwald M."/>
            <person name="Rost B."/>
            <person name="Ruan Y."/>
            <person name="Salzberg S.L."/>
            <person name="Sandelin A."/>
            <person name="Schneider C."/>
            <person name="Schoenbach C."/>
            <person name="Sekiguchi K."/>
            <person name="Semple C.A."/>
            <person name="Seno S."/>
            <person name="Sessa L."/>
            <person name="Sheng Y."/>
            <person name="Shibata Y."/>
            <person name="Shimada H."/>
            <person name="Shimada K."/>
            <person name="Silva D."/>
            <person name="Sinclair B."/>
            <person name="Sperling S."/>
            <person name="Stupka E."/>
            <person name="Sugiura K."/>
            <person name="Sultana R."/>
            <person name="Takenaka Y."/>
            <person name="Taki K."/>
            <person name="Tammoja K."/>
            <person name="Tan S.L."/>
            <person name="Tang S."/>
            <person name="Taylor M.S."/>
            <person name="Tegner J."/>
            <person name="Teichmann S.A."/>
            <person name="Ueda H.R."/>
            <person name="van Nimwegen E."/>
            <person name="Verardo R."/>
            <person name="Wei C.L."/>
            <person name="Yagi K."/>
            <person name="Yamanishi H."/>
            <person name="Zabarovsky E."/>
            <person name="Zhu S."/>
            <person name="Zimmer A."/>
            <person name="Hide W."/>
            <person name="Bult C."/>
            <person name="Grimmond S.M."/>
            <person name="Teasdale R.D."/>
            <person name="Liu E.T."/>
            <person name="Brusic V."/>
            <person name="Quackenbush J."/>
            <person name="Wahlestedt C."/>
            <person name="Mattick J.S."/>
            <person name="Hume D.A."/>
            <person name="Kai C."/>
            <person name="Sasaki D."/>
            <person name="Tomaru Y."/>
            <person name="Fukuda S."/>
            <person name="Kanamori-Katayama M."/>
            <person name="Suzuki M."/>
            <person name="Aoki J."/>
            <person name="Arakawa T."/>
            <person name="Iida J."/>
            <person name="Imamura K."/>
            <person name="Itoh M."/>
            <person name="Kato T."/>
            <person name="Kawaji H."/>
            <person name="Kawagashira N."/>
            <person name="Kawashima T."/>
            <person name="Kojima M."/>
            <person name="Kondo S."/>
            <person name="Konno H."/>
            <person name="Nakano K."/>
            <person name="Ninomiya N."/>
            <person name="Nishio T."/>
            <person name="Okada M."/>
            <person name="Plessy C."/>
            <person name="Shibata K."/>
            <person name="Shiraki T."/>
            <person name="Suzuki S."/>
            <person name="Tagami M."/>
            <person name="Waki K."/>
            <person name="Watahiki A."/>
            <person name="Okamura-Oho Y."/>
            <person name="Suzuki H."/>
            <person name="Kawai J."/>
            <person name="Hayashizaki Y."/>
        </authorList>
    </citation>
    <scope>NUCLEOTIDE SEQUENCE [LARGE SCALE MRNA]</scope>
    <source>
        <strain>C57BL/6J</strain>
        <tissue>Urinary bladder</tissue>
    </source>
</reference>
<reference key="3">
    <citation type="journal article" date="2009" name="PLoS Biol.">
        <title>Lineage-specific biology revealed by a finished genome assembly of the mouse.</title>
        <authorList>
            <person name="Church D.M."/>
            <person name="Goodstadt L."/>
            <person name="Hillier L.W."/>
            <person name="Zody M.C."/>
            <person name="Goldstein S."/>
            <person name="She X."/>
            <person name="Bult C.J."/>
            <person name="Agarwala R."/>
            <person name="Cherry J.L."/>
            <person name="DiCuccio M."/>
            <person name="Hlavina W."/>
            <person name="Kapustin Y."/>
            <person name="Meric P."/>
            <person name="Maglott D."/>
            <person name="Birtle Z."/>
            <person name="Marques A.C."/>
            <person name="Graves T."/>
            <person name="Zhou S."/>
            <person name="Teague B."/>
            <person name="Potamousis K."/>
            <person name="Churas C."/>
            <person name="Place M."/>
            <person name="Herschleb J."/>
            <person name="Runnheim R."/>
            <person name="Forrest D."/>
            <person name="Amos-Landgraf J."/>
            <person name="Schwartz D.C."/>
            <person name="Cheng Z."/>
            <person name="Lindblad-Toh K."/>
            <person name="Eichler E.E."/>
            <person name="Ponting C.P."/>
        </authorList>
    </citation>
    <scope>NUCLEOTIDE SEQUENCE [LARGE SCALE GENOMIC DNA]</scope>
    <source>
        <strain>C57BL/6J</strain>
    </source>
</reference>
<reference key="4">
    <citation type="journal article" date="2004" name="Genome Res.">
        <title>The status, quality, and expansion of the NIH full-length cDNA project: the Mammalian Gene Collection (MGC).</title>
        <authorList>
            <consortium name="The MGC Project Team"/>
        </authorList>
    </citation>
    <scope>NUCLEOTIDE SEQUENCE [LARGE SCALE MRNA]</scope>
</reference>
<reference key="5">
    <citation type="journal article" date="1992" name="J. Biol. Chem.">
        <title>Purification, structure, and characterization of caltrin proteins from seminal vesicle of the rat and mouse.</title>
        <authorList>
            <person name="Coronel C.E."/>
            <person name="Winnica D.E."/>
            <person name="Novella M.L."/>
            <person name="Lardy H.A."/>
        </authorList>
    </citation>
    <scope>PROTEIN SEQUENCE OF 24-99</scope>
    <source>
        <tissue>Seminal vesicle</tissue>
    </source>
</reference>
<reference key="6">
    <citation type="journal article" date="2008" name="J. Biol. Chem.">
        <title>PATE gene clusters code for multiple, secreted TFP/Ly-6/uPAR proteins that are expressed in reproductive and neuron-rich tissues and possess neuromodulatory activity.</title>
        <authorList>
            <person name="Levitin F."/>
            <person name="Weiss M."/>
            <person name="Hahn Y."/>
            <person name="Stern O."/>
            <person name="Papke R.L."/>
            <person name="Matusik R."/>
            <person name="Nandana S.R."/>
            <person name="Ziv R."/>
            <person name="Pichinuk E."/>
            <person name="Salame S."/>
            <person name="Bera T."/>
            <person name="Vincent J."/>
            <person name="Lee B."/>
            <person name="Pastan I."/>
            <person name="Wreschner D.H."/>
        </authorList>
    </citation>
    <scope>TISSUE SPECIFICITY</scope>
</reference>
<accession>Q09098</accession>
<accession>Q9D248</accession>
<accession>Q9R018</accession>
<organism>
    <name type="scientific">Mus musculus</name>
    <name type="common">Mouse</name>
    <dbReference type="NCBI Taxonomy" id="10090"/>
    <lineage>
        <taxon>Eukaryota</taxon>
        <taxon>Metazoa</taxon>
        <taxon>Chordata</taxon>
        <taxon>Craniata</taxon>
        <taxon>Vertebrata</taxon>
        <taxon>Euteleostomi</taxon>
        <taxon>Mammalia</taxon>
        <taxon>Eutheria</taxon>
        <taxon>Euarchontoglires</taxon>
        <taxon>Glires</taxon>
        <taxon>Rodentia</taxon>
        <taxon>Myomorpha</taxon>
        <taxon>Muroidea</taxon>
        <taxon>Muridae</taxon>
        <taxon>Murinae</taxon>
        <taxon>Mus</taxon>
        <taxon>Mus</taxon>
    </lineage>
</organism>
<gene>
    <name type="primary">Pate4</name>
    <name type="synonym">Svs7</name>
</gene>
<protein>
    <recommendedName>
        <fullName>Prostate and testis expressed protein 4</fullName>
    </recommendedName>
    <alternativeName>
        <fullName>Calcium transport inhibitor</fullName>
    </alternativeName>
    <alternativeName>
        <fullName>Caltrin</fullName>
    </alternativeName>
    <alternativeName>
        <fullName>PATE-like protein B</fullName>
        <shortName>PATE-B</shortName>
    </alternativeName>
    <alternativeName>
        <fullName>Seminal vesicle protein 7</fullName>
    </alternativeName>
    <alternativeName>
        <fullName>Seminal vesicle protein VII</fullName>
        <shortName>SVS VII</shortName>
    </alternativeName>
</protein>
<keyword id="KW-0106">Calcium</keyword>
<keyword id="KW-0112">Calmodulin-binding</keyword>
<keyword id="KW-0903">Direct protein sequencing</keyword>
<keyword id="KW-1015">Disulfide bond</keyword>
<keyword id="KW-1185">Reference proteome</keyword>
<keyword id="KW-0964">Secreted</keyword>
<keyword id="KW-0732">Signal</keyword>
<name>PATE4_MOUSE</name>
<comment type="function">
    <text evidence="2">Enhances sperm motility. Binds to calmodulin and inhibits calcium transport into spermatozoa. May modulate the function of nicotinic acetylcholine receptors.</text>
</comment>
<comment type="subcellular location">
    <subcellularLocation>
        <location>Secreted</location>
    </subcellularLocation>
</comment>
<comment type="tissue specificity">
    <text evidence="4">Expressed in prostate, testis, eye, kidney and skeletal muscle. Expressed in the dorsal lobe of prostate. Not expressed in the ventral lobe of prostate.</text>
</comment>
<comment type="induction">
    <text>By castration in the ventral lobe of prostate. This induction is suppressed by subsequent dihydroxytestosterone administration.</text>
</comment>
<comment type="mass spectrometry"/>
<comment type="similarity">
    <text evidence="5">Belongs to the PATE family.</text>
</comment>
<feature type="signal peptide" evidence="2 3">
    <location>
        <begin position="1"/>
        <end position="23"/>
    </location>
</feature>
<feature type="chain" id="PRO_0000036175" description="Prostate and testis expressed protein 4">
    <location>
        <begin position="24"/>
        <end position="99"/>
    </location>
</feature>
<feature type="domain" description="UPAR/Ly6" evidence="5">
    <location>
        <begin position="24"/>
        <end position="99"/>
    </location>
</feature>
<feature type="disulfide bond" evidence="1">
    <location>
        <begin position="26"/>
        <end position="52"/>
    </location>
</feature>
<feature type="disulfide bond" evidence="1">
    <location>
        <begin position="29"/>
        <end position="37"/>
    </location>
</feature>
<feature type="disulfide bond" evidence="1">
    <location>
        <begin position="44"/>
        <end position="70"/>
    </location>
</feature>
<feature type="disulfide bond" evidence="1">
    <location>
        <begin position="74"/>
        <end position="90"/>
    </location>
</feature>
<feature type="sequence conflict" description="In Ref. 1; AAD55589." evidence="5" ref="1">
    <original>S</original>
    <variation>P</variation>
    <location>
        <position position="40"/>
    </location>
</feature>
<feature type="sequence conflict" description="In Ref. 5; AA sequence." evidence="5" ref="5">
    <original>CC</original>
    <variation>FG</variation>
    <location>
        <begin position="90"/>
        <end position="91"/>
    </location>
</feature>
<feature type="sequence conflict" description="In Ref. 5; AA sequence." evidence="5" ref="5">
    <original>C</original>
    <variation>M</variation>
    <location>
        <position position="96"/>
    </location>
</feature>
<feature type="sequence conflict" description="In Ref. 5; AA sequence." evidence="5" ref="5">
    <location>
        <position position="98"/>
    </location>
</feature>
<dbReference type="EMBL" id="AF134204">
    <property type="protein sequence ID" value="AAD55589.1"/>
    <property type="molecule type" value="mRNA"/>
</dbReference>
<dbReference type="EMBL" id="AK020540">
    <property type="protein sequence ID" value="BAB32129.1"/>
    <property type="molecule type" value="mRNA"/>
</dbReference>
<dbReference type="EMBL" id="CH466522">
    <property type="protein sequence ID" value="EDL25400.1"/>
    <property type="molecule type" value="Genomic_DNA"/>
</dbReference>
<dbReference type="EMBL" id="BC120764">
    <property type="protein sequence ID" value="AAI20765.1"/>
    <property type="molecule type" value="mRNA"/>
</dbReference>
<dbReference type="EMBL" id="BC120766">
    <property type="protein sequence ID" value="AAI20767.1"/>
    <property type="molecule type" value="mRNA"/>
</dbReference>
<dbReference type="CCDS" id="CCDS22967.1"/>
<dbReference type="RefSeq" id="NP_064660.2">
    <property type="nucleotide sequence ID" value="NM_020264.5"/>
</dbReference>
<dbReference type="FunCoup" id="Q09098">
    <property type="interactions" value="373"/>
</dbReference>
<dbReference type="STRING" id="10090.ENSMUSP00000034610"/>
<dbReference type="TCDB" id="8.A.31.1.4">
    <property type="family name" value="the ly-6 neurotoxin-like protein1 precursor (lynx1) family"/>
</dbReference>
<dbReference type="PhosphoSitePlus" id="Q09098"/>
<dbReference type="PaxDb" id="10090-ENSMUSP00000034610"/>
<dbReference type="PeptideAtlas" id="Q09098"/>
<dbReference type="ProteomicsDB" id="287997"/>
<dbReference type="Antibodypedia" id="50680">
    <property type="antibodies" value="19 antibodies from 10 providers"/>
</dbReference>
<dbReference type="Ensembl" id="ENSMUST00000034610.4">
    <property type="protein sequence ID" value="ENSMUSP00000034610.3"/>
    <property type="gene ID" value="ENSMUSG00000032099.4"/>
</dbReference>
<dbReference type="GeneID" id="56872"/>
<dbReference type="KEGG" id="mmu:56872"/>
<dbReference type="UCSC" id="uc009otk.2">
    <property type="organism name" value="mouse"/>
</dbReference>
<dbReference type="AGR" id="MGI:1930790"/>
<dbReference type="CTD" id="399968"/>
<dbReference type="MGI" id="MGI:1930790">
    <property type="gene designation" value="Pate4"/>
</dbReference>
<dbReference type="VEuPathDB" id="HostDB:ENSMUSG00000032099"/>
<dbReference type="eggNOG" id="ENOG502T2SA">
    <property type="taxonomic scope" value="Eukaryota"/>
</dbReference>
<dbReference type="GeneTree" id="ENSGT00550000076001"/>
<dbReference type="HOGENOM" id="CLU_181650_0_0_1"/>
<dbReference type="InParanoid" id="Q09098"/>
<dbReference type="OMA" id="QGTCIAK"/>
<dbReference type="OrthoDB" id="9592768at2759"/>
<dbReference type="PhylomeDB" id="Q09098"/>
<dbReference type="BioGRID-ORCS" id="56872">
    <property type="hits" value="1 hit in 75 CRISPR screens"/>
</dbReference>
<dbReference type="ChiTaRS" id="Pate4">
    <property type="organism name" value="mouse"/>
</dbReference>
<dbReference type="PRO" id="PR:Q09098"/>
<dbReference type="Proteomes" id="UP000000589">
    <property type="component" value="Chromosome 9"/>
</dbReference>
<dbReference type="RNAct" id="Q09098">
    <property type="molecule type" value="protein"/>
</dbReference>
<dbReference type="Bgee" id="ENSMUSG00000032099">
    <property type="expression patterns" value="Expressed in seminal vesicle and 19 other cell types or tissues"/>
</dbReference>
<dbReference type="GO" id="GO:0001669">
    <property type="term" value="C:acrosomal vesicle"/>
    <property type="evidence" value="ECO:0000266"/>
    <property type="project" value="MGI"/>
</dbReference>
<dbReference type="GO" id="GO:0005615">
    <property type="term" value="C:extracellular space"/>
    <property type="evidence" value="ECO:0000266"/>
    <property type="project" value="MGI"/>
</dbReference>
<dbReference type="GO" id="GO:0005516">
    <property type="term" value="F:calmodulin binding"/>
    <property type="evidence" value="ECO:0007669"/>
    <property type="project" value="UniProtKB-KW"/>
</dbReference>
<dbReference type="GO" id="GO:0050804">
    <property type="term" value="P:modulation of chemical synaptic transmission"/>
    <property type="evidence" value="ECO:0000314"/>
    <property type="project" value="MGI"/>
</dbReference>
<dbReference type="GO" id="GO:0009611">
    <property type="term" value="P:response to wounding"/>
    <property type="evidence" value="ECO:0000314"/>
    <property type="project" value="MGI"/>
</dbReference>
<dbReference type="CDD" id="cd23580">
    <property type="entry name" value="TFP_LU_ECD_PATE4"/>
    <property type="match status" value="1"/>
</dbReference>
<dbReference type="Gene3D" id="2.10.60.10">
    <property type="entry name" value="CD59"/>
    <property type="match status" value="1"/>
</dbReference>
<dbReference type="InterPro" id="IPR016054">
    <property type="entry name" value="LY6_UPA_recep-like"/>
</dbReference>
<dbReference type="InterPro" id="IPR045860">
    <property type="entry name" value="Snake_toxin-like_sf"/>
</dbReference>
<dbReference type="Pfam" id="PF00021">
    <property type="entry name" value="UPAR_LY6"/>
    <property type="match status" value="1"/>
</dbReference>
<dbReference type="SUPFAM" id="SSF57302">
    <property type="entry name" value="Snake toxin-like"/>
    <property type="match status" value="1"/>
</dbReference>